<gene>
    <name evidence="2" type="primary">folD</name>
    <name type="ordered locus">ECP_0590</name>
</gene>
<proteinExistence type="inferred from homology"/>
<keyword id="KW-0028">Amino-acid biosynthesis</keyword>
<keyword id="KW-0368">Histidine biosynthesis</keyword>
<keyword id="KW-0378">Hydrolase</keyword>
<keyword id="KW-0486">Methionine biosynthesis</keyword>
<keyword id="KW-0511">Multifunctional enzyme</keyword>
<keyword id="KW-0521">NADP</keyword>
<keyword id="KW-0554">One-carbon metabolism</keyword>
<keyword id="KW-0560">Oxidoreductase</keyword>
<keyword id="KW-0658">Purine biosynthesis</keyword>
<organism>
    <name type="scientific">Escherichia coli O6:K15:H31 (strain 536 / UPEC)</name>
    <dbReference type="NCBI Taxonomy" id="362663"/>
    <lineage>
        <taxon>Bacteria</taxon>
        <taxon>Pseudomonadati</taxon>
        <taxon>Pseudomonadota</taxon>
        <taxon>Gammaproteobacteria</taxon>
        <taxon>Enterobacterales</taxon>
        <taxon>Enterobacteriaceae</taxon>
        <taxon>Escherichia</taxon>
    </lineage>
</organism>
<comment type="function">
    <text evidence="2">Catalyzes the oxidation of 5,10-methylenetetrahydrofolate to 5,10-methenyltetrahydrofolate and then the hydrolysis of 5,10-methenyltetrahydrofolate to 10-formyltetrahydrofolate.</text>
</comment>
<comment type="catalytic activity">
    <reaction evidence="2">
        <text>(6R)-5,10-methylene-5,6,7,8-tetrahydrofolate + NADP(+) = (6R)-5,10-methenyltetrahydrofolate + NADPH</text>
        <dbReference type="Rhea" id="RHEA:22812"/>
        <dbReference type="ChEBI" id="CHEBI:15636"/>
        <dbReference type="ChEBI" id="CHEBI:57455"/>
        <dbReference type="ChEBI" id="CHEBI:57783"/>
        <dbReference type="ChEBI" id="CHEBI:58349"/>
        <dbReference type="EC" id="1.5.1.5"/>
    </reaction>
</comment>
<comment type="catalytic activity">
    <reaction evidence="2">
        <text>(6R)-5,10-methenyltetrahydrofolate + H2O = (6R)-10-formyltetrahydrofolate + H(+)</text>
        <dbReference type="Rhea" id="RHEA:23700"/>
        <dbReference type="ChEBI" id="CHEBI:15377"/>
        <dbReference type="ChEBI" id="CHEBI:15378"/>
        <dbReference type="ChEBI" id="CHEBI:57455"/>
        <dbReference type="ChEBI" id="CHEBI:195366"/>
        <dbReference type="EC" id="3.5.4.9"/>
    </reaction>
</comment>
<comment type="pathway">
    <text evidence="2">One-carbon metabolism; tetrahydrofolate interconversion.</text>
</comment>
<comment type="subunit">
    <text evidence="2">Homodimer.</text>
</comment>
<comment type="similarity">
    <text evidence="2">Belongs to the tetrahydrofolate dehydrogenase/cyclohydrolase family.</text>
</comment>
<name>FOLD_ECOL5</name>
<protein>
    <recommendedName>
        <fullName evidence="2">Bifunctional protein FolD</fullName>
    </recommendedName>
    <domain>
        <recommendedName>
            <fullName evidence="2">Methylenetetrahydrofolate dehydrogenase</fullName>
            <ecNumber evidence="2">1.5.1.5</ecNumber>
        </recommendedName>
    </domain>
    <domain>
        <recommendedName>
            <fullName evidence="2">Methenyltetrahydrofolate cyclohydrolase</fullName>
            <ecNumber evidence="2">3.5.4.9</ecNumber>
        </recommendedName>
    </domain>
</protein>
<reference key="1">
    <citation type="journal article" date="2006" name="Mol. Microbiol.">
        <title>Role of pathogenicity island-associated integrases in the genome plasticity of uropathogenic Escherichia coli strain 536.</title>
        <authorList>
            <person name="Hochhut B."/>
            <person name="Wilde C."/>
            <person name="Balling G."/>
            <person name="Middendorf B."/>
            <person name="Dobrindt U."/>
            <person name="Brzuszkiewicz E."/>
            <person name="Gottschalk G."/>
            <person name="Carniel E."/>
            <person name="Hacker J."/>
        </authorList>
    </citation>
    <scope>NUCLEOTIDE SEQUENCE [LARGE SCALE GENOMIC DNA]</scope>
    <source>
        <strain>536 / UPEC</strain>
    </source>
</reference>
<sequence length="288" mass="30956">MAAKIIDGKTIAQQVRSEVAQKVQARIAAGLRAPGLAVVLVGSNPASQIYVASKRKACEEVGFVSRSYDLPETTSEAELLELIDALNADNTIDGILVQLPLPAGIDNVKVLERIHPDKDVDGFHPYNVGRLCQRAPRLRPCTPRGIVTLLERYNIDTFGLNAVVIGASNIVGRPMSMELLLAGCTTTVTHRFTKNLRHHVENADLLIVAVGKPGFIPGDWIKEGAIVIDVGINRLENGKVVGDVVFEDAAKRASYITPVPGGVGPMTVATLIENTLQACVEYHDPQGE</sequence>
<accession>Q0TKB2</accession>
<evidence type="ECO:0000250" key="1"/>
<evidence type="ECO:0000255" key="2">
    <source>
        <dbReference type="HAMAP-Rule" id="MF_01576"/>
    </source>
</evidence>
<dbReference type="EC" id="1.5.1.5" evidence="2"/>
<dbReference type="EC" id="3.5.4.9" evidence="2"/>
<dbReference type="EMBL" id="CP000247">
    <property type="protein sequence ID" value="ABG68619.1"/>
    <property type="molecule type" value="Genomic_DNA"/>
</dbReference>
<dbReference type="RefSeq" id="WP_000729155.1">
    <property type="nucleotide sequence ID" value="NC_008253.1"/>
</dbReference>
<dbReference type="SMR" id="Q0TKB2"/>
<dbReference type="GeneID" id="93776949"/>
<dbReference type="KEGG" id="ecp:ECP_0590"/>
<dbReference type="HOGENOM" id="CLU_034045_2_1_6"/>
<dbReference type="UniPathway" id="UPA00193"/>
<dbReference type="Proteomes" id="UP000009182">
    <property type="component" value="Chromosome"/>
</dbReference>
<dbReference type="GO" id="GO:0005829">
    <property type="term" value="C:cytosol"/>
    <property type="evidence" value="ECO:0007669"/>
    <property type="project" value="TreeGrafter"/>
</dbReference>
<dbReference type="GO" id="GO:0004477">
    <property type="term" value="F:methenyltetrahydrofolate cyclohydrolase activity"/>
    <property type="evidence" value="ECO:0007669"/>
    <property type="project" value="UniProtKB-UniRule"/>
</dbReference>
<dbReference type="GO" id="GO:0004488">
    <property type="term" value="F:methylenetetrahydrofolate dehydrogenase (NADP+) activity"/>
    <property type="evidence" value="ECO:0007669"/>
    <property type="project" value="UniProtKB-UniRule"/>
</dbReference>
<dbReference type="GO" id="GO:0000105">
    <property type="term" value="P:L-histidine biosynthetic process"/>
    <property type="evidence" value="ECO:0007669"/>
    <property type="project" value="UniProtKB-KW"/>
</dbReference>
<dbReference type="GO" id="GO:0009086">
    <property type="term" value="P:methionine biosynthetic process"/>
    <property type="evidence" value="ECO:0007669"/>
    <property type="project" value="UniProtKB-KW"/>
</dbReference>
<dbReference type="GO" id="GO:0006164">
    <property type="term" value="P:purine nucleotide biosynthetic process"/>
    <property type="evidence" value="ECO:0007669"/>
    <property type="project" value="UniProtKB-KW"/>
</dbReference>
<dbReference type="GO" id="GO:0035999">
    <property type="term" value="P:tetrahydrofolate interconversion"/>
    <property type="evidence" value="ECO:0007669"/>
    <property type="project" value="UniProtKB-UniRule"/>
</dbReference>
<dbReference type="CDD" id="cd01080">
    <property type="entry name" value="NAD_bind_m-THF_DH_Cyclohyd"/>
    <property type="match status" value="1"/>
</dbReference>
<dbReference type="FunFam" id="3.40.50.10860:FF:000001">
    <property type="entry name" value="Bifunctional protein FolD"/>
    <property type="match status" value="1"/>
</dbReference>
<dbReference type="FunFam" id="3.40.50.720:FF:000006">
    <property type="entry name" value="Bifunctional protein FolD"/>
    <property type="match status" value="1"/>
</dbReference>
<dbReference type="Gene3D" id="3.40.50.10860">
    <property type="entry name" value="Leucine Dehydrogenase, chain A, domain 1"/>
    <property type="match status" value="1"/>
</dbReference>
<dbReference type="Gene3D" id="3.40.50.720">
    <property type="entry name" value="NAD(P)-binding Rossmann-like Domain"/>
    <property type="match status" value="1"/>
</dbReference>
<dbReference type="HAMAP" id="MF_01576">
    <property type="entry name" value="THF_DHG_CYH"/>
    <property type="match status" value="1"/>
</dbReference>
<dbReference type="InterPro" id="IPR046346">
    <property type="entry name" value="Aminoacid_DH-like_N_sf"/>
</dbReference>
<dbReference type="InterPro" id="IPR036291">
    <property type="entry name" value="NAD(P)-bd_dom_sf"/>
</dbReference>
<dbReference type="InterPro" id="IPR000672">
    <property type="entry name" value="THF_DH/CycHdrlase"/>
</dbReference>
<dbReference type="InterPro" id="IPR020630">
    <property type="entry name" value="THF_DH/CycHdrlase_cat_dom"/>
</dbReference>
<dbReference type="InterPro" id="IPR020867">
    <property type="entry name" value="THF_DH/CycHdrlase_CS"/>
</dbReference>
<dbReference type="InterPro" id="IPR020631">
    <property type="entry name" value="THF_DH/CycHdrlase_NAD-bd_dom"/>
</dbReference>
<dbReference type="NCBIfam" id="NF008058">
    <property type="entry name" value="PRK10792.1"/>
    <property type="match status" value="1"/>
</dbReference>
<dbReference type="NCBIfam" id="NF010783">
    <property type="entry name" value="PRK14186.1"/>
    <property type="match status" value="1"/>
</dbReference>
<dbReference type="PANTHER" id="PTHR48099:SF5">
    <property type="entry name" value="C-1-TETRAHYDROFOLATE SYNTHASE, CYTOPLASMIC"/>
    <property type="match status" value="1"/>
</dbReference>
<dbReference type="PANTHER" id="PTHR48099">
    <property type="entry name" value="C-1-TETRAHYDROFOLATE SYNTHASE, CYTOPLASMIC-RELATED"/>
    <property type="match status" value="1"/>
</dbReference>
<dbReference type="Pfam" id="PF00763">
    <property type="entry name" value="THF_DHG_CYH"/>
    <property type="match status" value="1"/>
</dbReference>
<dbReference type="Pfam" id="PF02882">
    <property type="entry name" value="THF_DHG_CYH_C"/>
    <property type="match status" value="1"/>
</dbReference>
<dbReference type="PRINTS" id="PR00085">
    <property type="entry name" value="THFDHDRGNASE"/>
</dbReference>
<dbReference type="SUPFAM" id="SSF53223">
    <property type="entry name" value="Aminoacid dehydrogenase-like, N-terminal domain"/>
    <property type="match status" value="1"/>
</dbReference>
<dbReference type="SUPFAM" id="SSF51735">
    <property type="entry name" value="NAD(P)-binding Rossmann-fold domains"/>
    <property type="match status" value="1"/>
</dbReference>
<dbReference type="PROSITE" id="PS00766">
    <property type="entry name" value="THF_DHG_CYH_1"/>
    <property type="match status" value="1"/>
</dbReference>
<dbReference type="PROSITE" id="PS00767">
    <property type="entry name" value="THF_DHG_CYH_2"/>
    <property type="match status" value="1"/>
</dbReference>
<feature type="initiator methionine" description="Removed" evidence="1">
    <location>
        <position position="1"/>
    </location>
</feature>
<feature type="chain" id="PRO_0000268349" description="Bifunctional protein FolD">
    <location>
        <begin position="2"/>
        <end position="288"/>
    </location>
</feature>
<feature type="binding site" evidence="2">
    <location>
        <begin position="166"/>
        <end position="168"/>
    </location>
    <ligand>
        <name>NADP(+)</name>
        <dbReference type="ChEBI" id="CHEBI:58349"/>
    </ligand>
</feature>
<feature type="binding site" evidence="2">
    <location>
        <position position="232"/>
    </location>
    <ligand>
        <name>NADP(+)</name>
        <dbReference type="ChEBI" id="CHEBI:58349"/>
    </ligand>
</feature>